<proteinExistence type="inferred from homology"/>
<dbReference type="EMBL" id="AP010904">
    <property type="protein sequence ID" value="BAH75577.1"/>
    <property type="molecule type" value="Genomic_DNA"/>
</dbReference>
<dbReference type="RefSeq" id="WP_015860763.1">
    <property type="nucleotide sequence ID" value="NC_012796.1"/>
</dbReference>
<dbReference type="SMR" id="C4XS55"/>
<dbReference type="STRING" id="573370.DMR_20860"/>
<dbReference type="KEGG" id="dma:DMR_20860"/>
<dbReference type="eggNOG" id="COG0268">
    <property type="taxonomic scope" value="Bacteria"/>
</dbReference>
<dbReference type="HOGENOM" id="CLU_160655_3_1_7"/>
<dbReference type="OrthoDB" id="9807974at2"/>
<dbReference type="Proteomes" id="UP000009071">
    <property type="component" value="Chromosome"/>
</dbReference>
<dbReference type="GO" id="GO:0005829">
    <property type="term" value="C:cytosol"/>
    <property type="evidence" value="ECO:0007669"/>
    <property type="project" value="TreeGrafter"/>
</dbReference>
<dbReference type="GO" id="GO:0015935">
    <property type="term" value="C:small ribosomal subunit"/>
    <property type="evidence" value="ECO:0007669"/>
    <property type="project" value="TreeGrafter"/>
</dbReference>
<dbReference type="GO" id="GO:0070181">
    <property type="term" value="F:small ribosomal subunit rRNA binding"/>
    <property type="evidence" value="ECO:0007669"/>
    <property type="project" value="TreeGrafter"/>
</dbReference>
<dbReference type="GO" id="GO:0003735">
    <property type="term" value="F:structural constituent of ribosome"/>
    <property type="evidence" value="ECO:0007669"/>
    <property type="project" value="InterPro"/>
</dbReference>
<dbReference type="GO" id="GO:0006412">
    <property type="term" value="P:translation"/>
    <property type="evidence" value="ECO:0007669"/>
    <property type="project" value="UniProtKB-UniRule"/>
</dbReference>
<dbReference type="Gene3D" id="1.20.58.110">
    <property type="entry name" value="Ribosomal protein S20"/>
    <property type="match status" value="1"/>
</dbReference>
<dbReference type="HAMAP" id="MF_00500">
    <property type="entry name" value="Ribosomal_bS20"/>
    <property type="match status" value="1"/>
</dbReference>
<dbReference type="InterPro" id="IPR002583">
    <property type="entry name" value="Ribosomal_bS20"/>
</dbReference>
<dbReference type="InterPro" id="IPR036510">
    <property type="entry name" value="Ribosomal_bS20_sf"/>
</dbReference>
<dbReference type="NCBIfam" id="TIGR00029">
    <property type="entry name" value="S20"/>
    <property type="match status" value="1"/>
</dbReference>
<dbReference type="PANTHER" id="PTHR33398">
    <property type="entry name" value="30S RIBOSOMAL PROTEIN S20"/>
    <property type="match status" value="1"/>
</dbReference>
<dbReference type="PANTHER" id="PTHR33398:SF1">
    <property type="entry name" value="SMALL RIBOSOMAL SUBUNIT PROTEIN BS20C"/>
    <property type="match status" value="1"/>
</dbReference>
<dbReference type="Pfam" id="PF01649">
    <property type="entry name" value="Ribosomal_S20p"/>
    <property type="match status" value="1"/>
</dbReference>
<dbReference type="SUPFAM" id="SSF46992">
    <property type="entry name" value="Ribosomal protein S20"/>
    <property type="match status" value="1"/>
</dbReference>
<organism>
    <name type="scientific">Solidesulfovibrio magneticus (strain ATCC 700980 / DSM 13731 / RS-1)</name>
    <name type="common">Desulfovibrio magneticus</name>
    <dbReference type="NCBI Taxonomy" id="573370"/>
    <lineage>
        <taxon>Bacteria</taxon>
        <taxon>Pseudomonadati</taxon>
        <taxon>Thermodesulfobacteriota</taxon>
        <taxon>Desulfovibrionia</taxon>
        <taxon>Desulfovibrionales</taxon>
        <taxon>Desulfovibrionaceae</taxon>
        <taxon>Solidesulfovibrio</taxon>
    </lineage>
</organism>
<evidence type="ECO:0000255" key="1">
    <source>
        <dbReference type="HAMAP-Rule" id="MF_00500"/>
    </source>
</evidence>
<evidence type="ECO:0000305" key="2"/>
<keyword id="KW-0687">Ribonucleoprotein</keyword>
<keyword id="KW-0689">Ribosomal protein</keyword>
<keyword id="KW-0694">RNA-binding</keyword>
<keyword id="KW-0699">rRNA-binding</keyword>
<gene>
    <name evidence="1" type="primary">rpsT</name>
    <name type="ordered locus">DMR_20860</name>
</gene>
<comment type="function">
    <text evidence="1">Binds directly to 16S ribosomal RNA.</text>
</comment>
<comment type="similarity">
    <text evidence="1">Belongs to the bacterial ribosomal protein bS20 family.</text>
</comment>
<name>RS20_SOLM1</name>
<sequence>MANHKSAIKRHRQNLLARARNRAVKTRVRNVIKAVRAALIGGDAAAAETALLTATKVLDKAATKKIIHWKTAARNISRLSTAVNKAKSA</sequence>
<protein>
    <recommendedName>
        <fullName evidence="1">Small ribosomal subunit protein bS20</fullName>
    </recommendedName>
    <alternativeName>
        <fullName evidence="2">30S ribosomal protein S20</fullName>
    </alternativeName>
</protein>
<feature type="chain" id="PRO_1000206496" description="Small ribosomal subunit protein bS20">
    <location>
        <begin position="1"/>
        <end position="89"/>
    </location>
</feature>
<reference key="1">
    <citation type="journal article" date="2009" name="Genome Res.">
        <title>Whole genome sequence of Desulfovibrio magneticus strain RS-1 revealed common gene clusters in magnetotactic bacteria.</title>
        <authorList>
            <person name="Nakazawa H."/>
            <person name="Arakaki A."/>
            <person name="Narita-Yamada S."/>
            <person name="Yashiro I."/>
            <person name="Jinno K."/>
            <person name="Aoki N."/>
            <person name="Tsuruyama A."/>
            <person name="Okamura Y."/>
            <person name="Tanikawa S."/>
            <person name="Fujita N."/>
            <person name="Takeyama H."/>
            <person name="Matsunaga T."/>
        </authorList>
    </citation>
    <scope>NUCLEOTIDE SEQUENCE [LARGE SCALE GENOMIC DNA]</scope>
    <source>
        <strain>ATCC 700980 / DSM 13731 / RS-1</strain>
    </source>
</reference>
<accession>C4XS55</accession>